<protein>
    <recommendedName>
        <fullName evidence="2">Photoreceptor disk component PRCD</fullName>
    </recommendedName>
    <alternativeName>
        <fullName evidence="7">Progressive rod-cone degeneration protein</fullName>
    </alternativeName>
</protein>
<name>PRCD_CANLF</name>
<organism>
    <name type="scientific">Canis lupus familiaris</name>
    <name type="common">Dog</name>
    <name type="synonym">Canis familiaris</name>
    <dbReference type="NCBI Taxonomy" id="9615"/>
    <lineage>
        <taxon>Eukaryota</taxon>
        <taxon>Metazoa</taxon>
        <taxon>Chordata</taxon>
        <taxon>Craniata</taxon>
        <taxon>Vertebrata</taxon>
        <taxon>Euteleostomi</taxon>
        <taxon>Mammalia</taxon>
        <taxon>Eutheria</taxon>
        <taxon>Laurasiatheria</taxon>
        <taxon>Carnivora</taxon>
        <taxon>Caniformia</taxon>
        <taxon>Canidae</taxon>
        <taxon>Canis</taxon>
    </lineage>
</organism>
<sequence length="54" mass="6050">MCTTLFLLSTLAMLWRRRFANRVQPEPSGADGAVVGSRSERDLQSSGRKEEPLK</sequence>
<proteinExistence type="evidence at protein level"/>
<gene>
    <name evidence="2" type="primary">PRCD</name>
</gene>
<dbReference type="EMBL" id="DQ390330">
    <property type="protein sequence ID" value="ABD17421.1"/>
    <property type="molecule type" value="mRNA"/>
</dbReference>
<dbReference type="EMBL" id="DQ390332">
    <property type="protein sequence ID" value="ABD17423.1"/>
    <property type="molecule type" value="mRNA"/>
</dbReference>
<dbReference type="EMBL" id="DQ390334">
    <property type="protein sequence ID" value="ABD17425.1"/>
    <property type="molecule type" value="mRNA"/>
</dbReference>
<dbReference type="EMBL" id="DQ390335">
    <property type="protein sequence ID" value="ABD17426.1"/>
    <property type="molecule type" value="mRNA"/>
</dbReference>
<dbReference type="EMBL" id="DQ390336">
    <property type="protein sequence ID" value="ABD17427.1"/>
    <property type="molecule type" value="mRNA"/>
</dbReference>
<dbReference type="RefSeq" id="NP_001091029.1">
    <property type="nucleotide sequence ID" value="NM_001097560.2"/>
</dbReference>
<dbReference type="RefSeq" id="XP_038530814.1">
    <property type="nucleotide sequence ID" value="XM_038674886.1"/>
</dbReference>
<dbReference type="FunCoup" id="Q00LT9">
    <property type="interactions" value="1"/>
</dbReference>
<dbReference type="STRING" id="9615.ENSCAFP00000041988"/>
<dbReference type="PaxDb" id="9612-ENSCAFP00000041988"/>
<dbReference type="Ensembl" id="ENSCAFT00000049113.3">
    <property type="protein sequence ID" value="ENSCAFP00000041988.1"/>
    <property type="gene ID" value="ENSCAFG00000031593.3"/>
</dbReference>
<dbReference type="Ensembl" id="ENSCAFT00030002907.1">
    <property type="protein sequence ID" value="ENSCAFP00030002582.1"/>
    <property type="gene ID" value="ENSCAFG00030001612.1"/>
</dbReference>
<dbReference type="Ensembl" id="ENSCAFT00040000123.1">
    <property type="protein sequence ID" value="ENSCAFP00040000089.1"/>
    <property type="gene ID" value="ENSCAFG00040000075.1"/>
</dbReference>
<dbReference type="Ensembl" id="ENSCAFT00845030294.1">
    <property type="protein sequence ID" value="ENSCAFP00845023755.1"/>
    <property type="gene ID" value="ENSCAFG00845017103.1"/>
</dbReference>
<dbReference type="GeneID" id="100049006"/>
<dbReference type="KEGG" id="cfa:100049006"/>
<dbReference type="CTD" id="768206"/>
<dbReference type="VEuPathDB" id="HostDB:ENSCAFG00845017103"/>
<dbReference type="VGNC" id="VGNC:44942">
    <property type="gene designation" value="PRCD"/>
</dbReference>
<dbReference type="eggNOG" id="ENOG502TE0N">
    <property type="taxonomic scope" value="Eukaryota"/>
</dbReference>
<dbReference type="GeneTree" id="ENSGT00520000058096"/>
<dbReference type="HOGENOM" id="CLU_3175255_0_0_1"/>
<dbReference type="InParanoid" id="Q00LT9"/>
<dbReference type="OMA" id="CRRRFAN"/>
<dbReference type="OrthoDB" id="9609893at2759"/>
<dbReference type="Proteomes" id="UP000002254">
    <property type="component" value="Chromosome 9"/>
</dbReference>
<dbReference type="Proteomes" id="UP000694429">
    <property type="component" value="Chromosome 9"/>
</dbReference>
<dbReference type="Proteomes" id="UP000694542">
    <property type="component" value="Chromosome 9"/>
</dbReference>
<dbReference type="Proteomes" id="UP000805418">
    <property type="component" value="Chromosome 9"/>
</dbReference>
<dbReference type="Bgee" id="ENSCAFG00000031593">
    <property type="expression patterns" value="Expressed in bone marrow and 38 other cell types or tissues"/>
</dbReference>
<dbReference type="GO" id="GO:0005737">
    <property type="term" value="C:cytoplasm"/>
    <property type="evidence" value="ECO:0000250"/>
    <property type="project" value="UniProtKB"/>
</dbReference>
<dbReference type="GO" id="GO:0005783">
    <property type="term" value="C:endoplasmic reticulum"/>
    <property type="evidence" value="ECO:0000250"/>
    <property type="project" value="UniProtKB"/>
</dbReference>
<dbReference type="GO" id="GO:0005576">
    <property type="term" value="C:extracellular region"/>
    <property type="evidence" value="ECO:0000250"/>
    <property type="project" value="UniProtKB"/>
</dbReference>
<dbReference type="GO" id="GO:0005794">
    <property type="term" value="C:Golgi apparatus"/>
    <property type="evidence" value="ECO:0000250"/>
    <property type="project" value="UniProtKB"/>
</dbReference>
<dbReference type="GO" id="GO:0042622">
    <property type="term" value="C:photoreceptor outer segment membrane"/>
    <property type="evidence" value="ECO:0000318"/>
    <property type="project" value="GO_Central"/>
</dbReference>
<dbReference type="GO" id="GO:0002046">
    <property type="term" value="F:opsin binding"/>
    <property type="evidence" value="ECO:0000318"/>
    <property type="project" value="GO_Central"/>
</dbReference>
<dbReference type="GO" id="GO:0007601">
    <property type="term" value="P:visual perception"/>
    <property type="evidence" value="ECO:0007669"/>
    <property type="project" value="UniProtKB-KW"/>
</dbReference>
<dbReference type="InterPro" id="IPR027937">
    <property type="entry name" value="PRCD"/>
</dbReference>
<dbReference type="PANTHER" id="PTHR38501">
    <property type="entry name" value="PHOTORECEPTOR DISK COMPONENT PRCD"/>
    <property type="match status" value="1"/>
</dbReference>
<dbReference type="PANTHER" id="PTHR38501:SF1">
    <property type="entry name" value="PHOTORECEPTOR DISK COMPONENT PRCD"/>
    <property type="match status" value="1"/>
</dbReference>
<dbReference type="Pfam" id="PF15201">
    <property type="entry name" value="Rod_cone_degen"/>
    <property type="match status" value="1"/>
</dbReference>
<evidence type="ECO:0000250" key="1">
    <source>
        <dbReference type="UniProtKB" id="E1B7R9"/>
    </source>
</evidence>
<evidence type="ECO:0000250" key="2">
    <source>
        <dbReference type="UniProtKB" id="Q00LT1"/>
    </source>
</evidence>
<evidence type="ECO:0000250" key="3">
    <source>
        <dbReference type="UniProtKB" id="Q00LT2"/>
    </source>
</evidence>
<evidence type="ECO:0000255" key="4"/>
<evidence type="ECO:0000256" key="5">
    <source>
        <dbReference type="SAM" id="MobiDB-lite"/>
    </source>
</evidence>
<evidence type="ECO:0000269" key="6">
    <source>
    </source>
</evidence>
<evidence type="ECO:0000303" key="7">
    <source>
    </source>
</evidence>
<evidence type="ECO:0000305" key="8"/>
<feature type="chain" id="PRO_0000280352" description="Photoreceptor disk component PRCD" evidence="4">
    <location>
        <begin position="1"/>
        <end position="54"/>
    </location>
</feature>
<feature type="region of interest" description="Disordered" evidence="5">
    <location>
        <begin position="24"/>
        <end position="54"/>
    </location>
</feature>
<feature type="compositionally biased region" description="Basic and acidic residues" evidence="5">
    <location>
        <begin position="38"/>
        <end position="54"/>
    </location>
</feature>
<feature type="lipid moiety-binding region" description="S-palmitoyl cysteine" evidence="2">
    <location>
        <position position="2"/>
    </location>
</feature>
<feature type="sequence variant" description="In PRCD." evidence="6">
    <original>C</original>
    <variation>Y</variation>
    <location>
        <position position="2"/>
    </location>
</feature>
<feature type="sequence conflict" description="In Ref. 1; ABD17425/ABD17426/ABD17427." evidence="8" ref="1">
    <original>NRVQ</original>
    <variation>PPGP</variation>
    <location>
        <begin position="21"/>
        <end position="24"/>
    </location>
</feature>
<comment type="function">
    <text evidence="6">Involved in vision.</text>
</comment>
<comment type="subunit">
    <text evidence="3">Interacts with RHO/rhodopsin; the interaction promotes PRCD stability.</text>
</comment>
<comment type="subcellular location">
    <subcellularLocation>
        <location evidence="3">Cell projection</location>
        <location evidence="3">Cilium</location>
        <location evidence="3">Photoreceptor outer segment</location>
    </subcellularLocation>
    <subcellularLocation>
        <location evidence="3">Membrane</location>
        <topology evidence="3">Lipid-anchor</topology>
        <orientation evidence="3">Cytoplasmic side</orientation>
    </subcellularLocation>
    <subcellularLocation>
        <location evidence="2">Endoplasmic reticulum</location>
    </subcellularLocation>
    <subcellularLocation>
        <location evidence="2">Golgi apparatus</location>
    </subcellularLocation>
    <text evidence="3">Localizes to photoreceptor disk membranes in the photoreceptor outer segment.</text>
</comment>
<comment type="tissue specificity">
    <text evidence="6">Expressed in retina.</text>
</comment>
<comment type="PTM">
    <text evidence="3">Palmitoylated at Cys-2. Palmitoylation is essential for protein stability and trafficking to the photoreceptor outer segment, but does not appear to be essential for membrane localization. Probably palmitoylated by ZDHHC3.</text>
</comment>
<comment type="PTM">
    <text evidence="1">Phosphorylated.</text>
</comment>
<comment type="disease">
    <text evidence="6">Defects in PRCD are the cause of progressive rod-cone degeneration (PRCD) (PubMed:16938425). PRCD is the most widespread hereditary retinal disease leading to blindness in dogs and phenotypically is the canine counterpart of retinitis pigmentosa in humans (PubMed:16938425).</text>
</comment>
<comment type="similarity">
    <text evidence="8">Belongs to the PRCD family.</text>
</comment>
<accession>Q00LT9</accession>
<accession>Q00LT3</accession>
<accession>Q00LT7</accession>
<reference key="1">
    <citation type="journal article" date="2006" name="Genomics">
        <title>Identical mutation in a novel retinal gene causes progressive rod-cone degeneration in dogs and retinitis pigmentosa in humans.</title>
        <authorList>
            <person name="Zangerl B."/>
            <person name="Goldstein O."/>
            <person name="Philp A.R."/>
            <person name="Lindauer S.J.P."/>
            <person name="Pearce-Kelling S.E."/>
            <person name="Mullins R.F."/>
            <person name="Graphodatsky A.S."/>
            <person name="Ripoll D."/>
            <person name="Felix J.S."/>
            <person name="Stone E.M."/>
            <person name="Acland G.M."/>
            <person name="Aguirre G.D."/>
        </authorList>
    </citation>
    <scope>NUCLEOTIDE SEQUENCE [MRNA]</scope>
    <scope>FUNCTION</scope>
    <scope>TISSUE SPECIFICITY</scope>
    <scope>VARIANT PRCD TYR-2</scope>
    <scope>DISEASE</scope>
</reference>
<keyword id="KW-0966">Cell projection</keyword>
<keyword id="KW-0225">Disease variant</keyword>
<keyword id="KW-0256">Endoplasmic reticulum</keyword>
<keyword id="KW-0333">Golgi apparatus</keyword>
<keyword id="KW-0449">Lipoprotein</keyword>
<keyword id="KW-0472">Membrane</keyword>
<keyword id="KW-0564">Palmitate</keyword>
<keyword id="KW-1185">Reference proteome</keyword>
<keyword id="KW-0682">Retinitis pigmentosa</keyword>
<keyword id="KW-0716">Sensory transduction</keyword>
<keyword id="KW-0844">Vision</keyword>